<proteinExistence type="inferred from homology"/>
<dbReference type="EC" id="2.7.7.3" evidence="1"/>
<dbReference type="EMBL" id="AE000657">
    <property type="protein sequence ID" value="AAC06565.1"/>
    <property type="molecule type" value="Genomic_DNA"/>
</dbReference>
<dbReference type="PIR" id="B70323">
    <property type="entry name" value="B70323"/>
</dbReference>
<dbReference type="RefSeq" id="NP_213174.1">
    <property type="nucleotide sequence ID" value="NC_000918.1"/>
</dbReference>
<dbReference type="RefSeq" id="WP_010880112.1">
    <property type="nucleotide sequence ID" value="NC_000918.1"/>
</dbReference>
<dbReference type="SMR" id="O66614"/>
<dbReference type="FunCoup" id="O66614">
    <property type="interactions" value="357"/>
</dbReference>
<dbReference type="STRING" id="224324.aq_253"/>
<dbReference type="EnsemblBacteria" id="AAC06565">
    <property type="protein sequence ID" value="AAC06565"/>
    <property type="gene ID" value="aq_253"/>
</dbReference>
<dbReference type="KEGG" id="aae:aq_253"/>
<dbReference type="PATRIC" id="fig|224324.8.peg.206"/>
<dbReference type="eggNOG" id="COG0669">
    <property type="taxonomic scope" value="Bacteria"/>
</dbReference>
<dbReference type="HOGENOM" id="CLU_100149_0_1_0"/>
<dbReference type="InParanoid" id="O66614"/>
<dbReference type="OrthoDB" id="9806661at2"/>
<dbReference type="UniPathway" id="UPA00241">
    <property type="reaction ID" value="UER00355"/>
</dbReference>
<dbReference type="Proteomes" id="UP000000798">
    <property type="component" value="Chromosome"/>
</dbReference>
<dbReference type="GO" id="GO:0005737">
    <property type="term" value="C:cytoplasm"/>
    <property type="evidence" value="ECO:0007669"/>
    <property type="project" value="UniProtKB-SubCell"/>
</dbReference>
<dbReference type="GO" id="GO:0005524">
    <property type="term" value="F:ATP binding"/>
    <property type="evidence" value="ECO:0007669"/>
    <property type="project" value="UniProtKB-KW"/>
</dbReference>
<dbReference type="GO" id="GO:0004595">
    <property type="term" value="F:pantetheine-phosphate adenylyltransferase activity"/>
    <property type="evidence" value="ECO:0000318"/>
    <property type="project" value="GO_Central"/>
</dbReference>
<dbReference type="GO" id="GO:0015937">
    <property type="term" value="P:coenzyme A biosynthetic process"/>
    <property type="evidence" value="ECO:0000318"/>
    <property type="project" value="GO_Central"/>
</dbReference>
<dbReference type="CDD" id="cd02163">
    <property type="entry name" value="PPAT"/>
    <property type="match status" value="1"/>
</dbReference>
<dbReference type="Gene3D" id="3.40.50.620">
    <property type="entry name" value="HUPs"/>
    <property type="match status" value="1"/>
</dbReference>
<dbReference type="HAMAP" id="MF_00151">
    <property type="entry name" value="PPAT_bact"/>
    <property type="match status" value="1"/>
</dbReference>
<dbReference type="InterPro" id="IPR004821">
    <property type="entry name" value="Cyt_trans-like"/>
</dbReference>
<dbReference type="InterPro" id="IPR001980">
    <property type="entry name" value="PPAT"/>
</dbReference>
<dbReference type="InterPro" id="IPR014729">
    <property type="entry name" value="Rossmann-like_a/b/a_fold"/>
</dbReference>
<dbReference type="NCBIfam" id="TIGR01510">
    <property type="entry name" value="coaD_prev_kdtB"/>
    <property type="match status" value="1"/>
</dbReference>
<dbReference type="NCBIfam" id="TIGR00125">
    <property type="entry name" value="cyt_tran_rel"/>
    <property type="match status" value="1"/>
</dbReference>
<dbReference type="PANTHER" id="PTHR21342">
    <property type="entry name" value="PHOSPHOPANTETHEINE ADENYLYLTRANSFERASE"/>
    <property type="match status" value="1"/>
</dbReference>
<dbReference type="PANTHER" id="PTHR21342:SF1">
    <property type="entry name" value="PHOSPHOPANTETHEINE ADENYLYLTRANSFERASE"/>
    <property type="match status" value="1"/>
</dbReference>
<dbReference type="Pfam" id="PF01467">
    <property type="entry name" value="CTP_transf_like"/>
    <property type="match status" value="1"/>
</dbReference>
<dbReference type="PRINTS" id="PR01020">
    <property type="entry name" value="LPSBIOSNTHSS"/>
</dbReference>
<dbReference type="SUPFAM" id="SSF52374">
    <property type="entry name" value="Nucleotidylyl transferase"/>
    <property type="match status" value="1"/>
</dbReference>
<sequence>MGKRVVYPGTFDPPHYGHLDIVKRSARIFDEVVVAVAKKPRKFLLFDAEERVKMFEKMVEDIPNVEVKMFDCLLVDFMKREGINVIVRGVRLFTDFEYELQIALTNYKLAGVETVFMMPSQEYIHISSTIVRDVASYCGDLDNMVHPYVKQKLREKFNCGS</sequence>
<comment type="function">
    <text evidence="1">Reversibly transfers an adenylyl group from ATP to 4'-phosphopantetheine, yielding dephospho-CoA (dPCoA) and pyrophosphate.</text>
</comment>
<comment type="catalytic activity">
    <reaction evidence="1">
        <text>(R)-4'-phosphopantetheine + ATP + H(+) = 3'-dephospho-CoA + diphosphate</text>
        <dbReference type="Rhea" id="RHEA:19801"/>
        <dbReference type="ChEBI" id="CHEBI:15378"/>
        <dbReference type="ChEBI" id="CHEBI:30616"/>
        <dbReference type="ChEBI" id="CHEBI:33019"/>
        <dbReference type="ChEBI" id="CHEBI:57328"/>
        <dbReference type="ChEBI" id="CHEBI:61723"/>
        <dbReference type="EC" id="2.7.7.3"/>
    </reaction>
</comment>
<comment type="cofactor">
    <cofactor evidence="1">
        <name>Mg(2+)</name>
        <dbReference type="ChEBI" id="CHEBI:18420"/>
    </cofactor>
</comment>
<comment type="pathway">
    <text evidence="1">Cofactor biosynthesis; coenzyme A biosynthesis; CoA from (R)-pantothenate: step 4/5.</text>
</comment>
<comment type="subunit">
    <text evidence="1">Homohexamer.</text>
</comment>
<comment type="subcellular location">
    <subcellularLocation>
        <location evidence="1">Cytoplasm</location>
    </subcellularLocation>
</comment>
<comment type="similarity">
    <text evidence="1">Belongs to the bacterial CoaD family.</text>
</comment>
<evidence type="ECO:0000255" key="1">
    <source>
        <dbReference type="HAMAP-Rule" id="MF_00151"/>
    </source>
</evidence>
<gene>
    <name evidence="1" type="primary">coaD</name>
    <name type="synonym">kdtB</name>
    <name type="ordered locus">aq_253</name>
</gene>
<keyword id="KW-0067">ATP-binding</keyword>
<keyword id="KW-0173">Coenzyme A biosynthesis</keyword>
<keyword id="KW-0963">Cytoplasm</keyword>
<keyword id="KW-0460">Magnesium</keyword>
<keyword id="KW-0547">Nucleotide-binding</keyword>
<keyword id="KW-0548">Nucleotidyltransferase</keyword>
<keyword id="KW-1185">Reference proteome</keyword>
<keyword id="KW-0808">Transferase</keyword>
<protein>
    <recommendedName>
        <fullName evidence="1">Phosphopantetheine adenylyltransferase</fullName>
        <ecNumber evidence="1">2.7.7.3</ecNumber>
    </recommendedName>
    <alternativeName>
        <fullName evidence="1">Dephospho-CoA pyrophosphorylase</fullName>
    </alternativeName>
    <alternativeName>
        <fullName evidence="1">Pantetheine-phosphate adenylyltransferase</fullName>
        <shortName evidence="1">PPAT</shortName>
    </alternativeName>
</protein>
<reference key="1">
    <citation type="journal article" date="1998" name="Nature">
        <title>The complete genome of the hyperthermophilic bacterium Aquifex aeolicus.</title>
        <authorList>
            <person name="Deckert G."/>
            <person name="Warren P.V."/>
            <person name="Gaasterland T."/>
            <person name="Young W.G."/>
            <person name="Lenox A.L."/>
            <person name="Graham D.E."/>
            <person name="Overbeek R."/>
            <person name="Snead M.A."/>
            <person name="Keller M."/>
            <person name="Aujay M."/>
            <person name="Huber R."/>
            <person name="Feldman R.A."/>
            <person name="Short J.M."/>
            <person name="Olsen G.J."/>
            <person name="Swanson R.V."/>
        </authorList>
    </citation>
    <scope>NUCLEOTIDE SEQUENCE [LARGE SCALE GENOMIC DNA]</scope>
    <source>
        <strain>VF5</strain>
    </source>
</reference>
<organism>
    <name type="scientific">Aquifex aeolicus (strain VF5)</name>
    <dbReference type="NCBI Taxonomy" id="224324"/>
    <lineage>
        <taxon>Bacteria</taxon>
        <taxon>Pseudomonadati</taxon>
        <taxon>Aquificota</taxon>
        <taxon>Aquificia</taxon>
        <taxon>Aquificales</taxon>
        <taxon>Aquificaceae</taxon>
        <taxon>Aquifex</taxon>
    </lineage>
</organism>
<name>COAD_AQUAE</name>
<feature type="chain" id="PRO_0000156160" description="Phosphopantetheine adenylyltransferase">
    <location>
        <begin position="1"/>
        <end position="161"/>
    </location>
</feature>
<feature type="binding site" evidence="1">
    <location>
        <begin position="10"/>
        <end position="11"/>
    </location>
    <ligand>
        <name>ATP</name>
        <dbReference type="ChEBI" id="CHEBI:30616"/>
    </ligand>
</feature>
<feature type="binding site" evidence="1">
    <location>
        <position position="10"/>
    </location>
    <ligand>
        <name>substrate</name>
    </ligand>
</feature>
<feature type="binding site" evidence="1">
    <location>
        <position position="18"/>
    </location>
    <ligand>
        <name>ATP</name>
        <dbReference type="ChEBI" id="CHEBI:30616"/>
    </ligand>
</feature>
<feature type="binding site" evidence="1">
    <location>
        <position position="42"/>
    </location>
    <ligand>
        <name>substrate</name>
    </ligand>
</feature>
<feature type="binding site" evidence="1">
    <location>
        <position position="74"/>
    </location>
    <ligand>
        <name>substrate</name>
    </ligand>
</feature>
<feature type="binding site" evidence="1">
    <location>
        <position position="88"/>
    </location>
    <ligand>
        <name>substrate</name>
    </ligand>
</feature>
<feature type="binding site" evidence="1">
    <location>
        <begin position="89"/>
        <end position="91"/>
    </location>
    <ligand>
        <name>ATP</name>
        <dbReference type="ChEBI" id="CHEBI:30616"/>
    </ligand>
</feature>
<feature type="binding site" evidence="1">
    <location>
        <position position="99"/>
    </location>
    <ligand>
        <name>ATP</name>
        <dbReference type="ChEBI" id="CHEBI:30616"/>
    </ligand>
</feature>
<feature type="binding site" evidence="1">
    <location>
        <begin position="123"/>
        <end position="129"/>
    </location>
    <ligand>
        <name>ATP</name>
        <dbReference type="ChEBI" id="CHEBI:30616"/>
    </ligand>
</feature>
<feature type="site" description="Transition state stabilizer" evidence="1">
    <location>
        <position position="18"/>
    </location>
</feature>
<accession>O66614</accession>